<reference key="1">
    <citation type="journal article" date="2000" name="Nature">
        <title>Complete DNA sequence of a serogroup A strain of Neisseria meningitidis Z2491.</title>
        <authorList>
            <person name="Parkhill J."/>
            <person name="Achtman M."/>
            <person name="James K.D."/>
            <person name="Bentley S.D."/>
            <person name="Churcher C.M."/>
            <person name="Klee S.R."/>
            <person name="Morelli G."/>
            <person name="Basham D."/>
            <person name="Brown D."/>
            <person name="Chillingworth T."/>
            <person name="Davies R.M."/>
            <person name="Davis P."/>
            <person name="Devlin K."/>
            <person name="Feltwell T."/>
            <person name="Hamlin N."/>
            <person name="Holroyd S."/>
            <person name="Jagels K."/>
            <person name="Leather S."/>
            <person name="Moule S."/>
            <person name="Mungall K.L."/>
            <person name="Quail M.A."/>
            <person name="Rajandream M.A."/>
            <person name="Rutherford K.M."/>
            <person name="Simmonds M."/>
            <person name="Skelton J."/>
            <person name="Whitehead S."/>
            <person name="Spratt B.G."/>
            <person name="Barrell B.G."/>
        </authorList>
    </citation>
    <scope>NUCLEOTIDE SEQUENCE [LARGE SCALE GENOMIC DNA]</scope>
    <source>
        <strain>DSM 15465 / Z2491</strain>
    </source>
</reference>
<name>RS16_NEIMA</name>
<gene>
    <name evidence="1" type="primary">rpsP</name>
    <name type="ordered locus">NMA0795</name>
</gene>
<accession>P66437</accession>
<accession>A1IQK9</accession>
<accession>Q9JQP8</accession>
<dbReference type="EMBL" id="AL157959">
    <property type="protein sequence ID" value="CAM08041.1"/>
    <property type="molecule type" value="Genomic_DNA"/>
</dbReference>
<dbReference type="RefSeq" id="WP_002214315.1">
    <property type="nucleotide sequence ID" value="NC_003116.1"/>
</dbReference>
<dbReference type="SMR" id="P66437"/>
<dbReference type="EnsemblBacteria" id="CAM08041">
    <property type="protein sequence ID" value="CAM08041"/>
    <property type="gene ID" value="NMA0795"/>
</dbReference>
<dbReference type="GeneID" id="93386578"/>
<dbReference type="KEGG" id="nma:NMA0795"/>
<dbReference type="HOGENOM" id="CLU_100590_5_1_4"/>
<dbReference type="Proteomes" id="UP000000626">
    <property type="component" value="Chromosome"/>
</dbReference>
<dbReference type="GO" id="GO:0005737">
    <property type="term" value="C:cytoplasm"/>
    <property type="evidence" value="ECO:0007669"/>
    <property type="project" value="UniProtKB-ARBA"/>
</dbReference>
<dbReference type="GO" id="GO:0015935">
    <property type="term" value="C:small ribosomal subunit"/>
    <property type="evidence" value="ECO:0007669"/>
    <property type="project" value="TreeGrafter"/>
</dbReference>
<dbReference type="GO" id="GO:0003735">
    <property type="term" value="F:structural constituent of ribosome"/>
    <property type="evidence" value="ECO:0007669"/>
    <property type="project" value="InterPro"/>
</dbReference>
<dbReference type="GO" id="GO:0006412">
    <property type="term" value="P:translation"/>
    <property type="evidence" value="ECO:0007669"/>
    <property type="project" value="UniProtKB-UniRule"/>
</dbReference>
<dbReference type="FunFam" id="3.30.1320.10:FF:000001">
    <property type="entry name" value="30S ribosomal protein S16"/>
    <property type="match status" value="1"/>
</dbReference>
<dbReference type="Gene3D" id="3.30.1320.10">
    <property type="match status" value="1"/>
</dbReference>
<dbReference type="HAMAP" id="MF_00385">
    <property type="entry name" value="Ribosomal_bS16"/>
    <property type="match status" value="1"/>
</dbReference>
<dbReference type="InterPro" id="IPR000307">
    <property type="entry name" value="Ribosomal_bS16"/>
</dbReference>
<dbReference type="InterPro" id="IPR023803">
    <property type="entry name" value="Ribosomal_bS16_dom_sf"/>
</dbReference>
<dbReference type="NCBIfam" id="TIGR00002">
    <property type="entry name" value="S16"/>
    <property type="match status" value="1"/>
</dbReference>
<dbReference type="PANTHER" id="PTHR12919">
    <property type="entry name" value="30S RIBOSOMAL PROTEIN S16"/>
    <property type="match status" value="1"/>
</dbReference>
<dbReference type="PANTHER" id="PTHR12919:SF20">
    <property type="entry name" value="SMALL RIBOSOMAL SUBUNIT PROTEIN BS16M"/>
    <property type="match status" value="1"/>
</dbReference>
<dbReference type="Pfam" id="PF00886">
    <property type="entry name" value="Ribosomal_S16"/>
    <property type="match status" value="1"/>
</dbReference>
<dbReference type="SUPFAM" id="SSF54565">
    <property type="entry name" value="Ribosomal protein S16"/>
    <property type="match status" value="1"/>
</dbReference>
<organism>
    <name type="scientific">Neisseria meningitidis serogroup A / serotype 4A (strain DSM 15465 / Z2491)</name>
    <dbReference type="NCBI Taxonomy" id="122587"/>
    <lineage>
        <taxon>Bacteria</taxon>
        <taxon>Pseudomonadati</taxon>
        <taxon>Pseudomonadota</taxon>
        <taxon>Betaproteobacteria</taxon>
        <taxon>Neisseriales</taxon>
        <taxon>Neisseriaceae</taxon>
        <taxon>Neisseria</taxon>
    </lineage>
</organism>
<feature type="chain" id="PRO_0000167215" description="Small ribosomal subunit protein bS16">
    <location>
        <begin position="1"/>
        <end position="81"/>
    </location>
</feature>
<proteinExistence type="inferred from homology"/>
<evidence type="ECO:0000255" key="1">
    <source>
        <dbReference type="HAMAP-Rule" id="MF_00385"/>
    </source>
</evidence>
<evidence type="ECO:0000305" key="2"/>
<comment type="similarity">
    <text evidence="1">Belongs to the bacterial ribosomal protein bS16 family.</text>
</comment>
<protein>
    <recommendedName>
        <fullName evidence="1">Small ribosomal subunit protein bS16</fullName>
    </recommendedName>
    <alternativeName>
        <fullName evidence="2">30S ribosomal protein S16</fullName>
    </alternativeName>
</protein>
<sequence>MVVIRLARGGSKHRPFYNVIVTDSRSRRDGRFIERVGFYNPVANEKQERVRLNADRLNHWIAQGAQVSDSVAKLIKEQKAA</sequence>
<keyword id="KW-0687">Ribonucleoprotein</keyword>
<keyword id="KW-0689">Ribosomal protein</keyword>